<keyword id="KW-0067">ATP-binding</keyword>
<keyword id="KW-0238">DNA-binding</keyword>
<keyword id="KW-0547">Nucleotide-binding</keyword>
<keyword id="KW-0597">Phosphoprotein</keyword>
<keyword id="KW-0804">Transcription</keyword>
<keyword id="KW-0805">Transcription regulation</keyword>
<reference key="1">
    <citation type="submission" date="2007-09" db="EMBL/GenBank/DDBJ databases">
        <title>Complete sequence of chromosome of Serratia proteamaculans 568.</title>
        <authorList>
            <consortium name="US DOE Joint Genome Institute"/>
            <person name="Copeland A."/>
            <person name="Lucas S."/>
            <person name="Lapidus A."/>
            <person name="Barry K."/>
            <person name="Glavina del Rio T."/>
            <person name="Dalin E."/>
            <person name="Tice H."/>
            <person name="Pitluck S."/>
            <person name="Chain P."/>
            <person name="Malfatti S."/>
            <person name="Shin M."/>
            <person name="Vergez L."/>
            <person name="Schmutz J."/>
            <person name="Larimer F."/>
            <person name="Land M."/>
            <person name="Hauser L."/>
            <person name="Kyrpides N."/>
            <person name="Kim E."/>
            <person name="Taghavi S."/>
            <person name="Newman L."/>
            <person name="Vangronsveld J."/>
            <person name="van der Lelie D."/>
            <person name="Richardson P."/>
        </authorList>
    </citation>
    <scope>NUCLEOTIDE SEQUENCE [LARGE SCALE GENOMIC DNA]</scope>
    <source>
        <strain>568</strain>
    </source>
</reference>
<feature type="chain" id="PRO_0000341322" description="Anaerobic nitric oxide reductase transcription regulator NorR">
    <location>
        <begin position="1"/>
        <end position="507"/>
    </location>
</feature>
<feature type="domain" description="Sigma-54 factor interaction" evidence="1">
    <location>
        <begin position="188"/>
        <end position="417"/>
    </location>
</feature>
<feature type="DNA-binding region" description="H-T-H motif" evidence="1">
    <location>
        <begin position="483"/>
        <end position="502"/>
    </location>
</feature>
<feature type="binding site" evidence="1">
    <location>
        <begin position="216"/>
        <end position="223"/>
    </location>
    <ligand>
        <name>ATP</name>
        <dbReference type="ChEBI" id="CHEBI:30616"/>
    </ligand>
</feature>
<feature type="binding site" evidence="1">
    <location>
        <begin position="279"/>
        <end position="288"/>
    </location>
    <ligand>
        <name>ATP</name>
        <dbReference type="ChEBI" id="CHEBI:30616"/>
    </ligand>
</feature>
<feature type="modified residue" description="4-aspartylphosphate" evidence="1">
    <location>
        <position position="57"/>
    </location>
</feature>
<dbReference type="EMBL" id="CP000826">
    <property type="protein sequence ID" value="ABV42133.1"/>
    <property type="status" value="ALT_INIT"/>
    <property type="molecule type" value="Genomic_DNA"/>
</dbReference>
<dbReference type="SMR" id="A8GG93"/>
<dbReference type="STRING" id="399741.Spro_3032"/>
<dbReference type="KEGG" id="spe:Spro_3032"/>
<dbReference type="eggNOG" id="COG3604">
    <property type="taxonomic scope" value="Bacteria"/>
</dbReference>
<dbReference type="HOGENOM" id="CLU_000445_125_0_6"/>
<dbReference type="OrthoDB" id="9804019at2"/>
<dbReference type="UniPathway" id="UPA00638"/>
<dbReference type="GO" id="GO:0005524">
    <property type="term" value="F:ATP binding"/>
    <property type="evidence" value="ECO:0007669"/>
    <property type="project" value="UniProtKB-UniRule"/>
</dbReference>
<dbReference type="GO" id="GO:0016887">
    <property type="term" value="F:ATP hydrolysis activity"/>
    <property type="evidence" value="ECO:0007669"/>
    <property type="project" value="InterPro"/>
</dbReference>
<dbReference type="GO" id="GO:0003677">
    <property type="term" value="F:DNA binding"/>
    <property type="evidence" value="ECO:0007669"/>
    <property type="project" value="UniProtKB-KW"/>
</dbReference>
<dbReference type="GO" id="GO:0003700">
    <property type="term" value="F:DNA-binding transcription factor activity"/>
    <property type="evidence" value="ECO:0007669"/>
    <property type="project" value="UniProtKB-UniRule"/>
</dbReference>
<dbReference type="GO" id="GO:0000160">
    <property type="term" value="P:phosphorelay signal transduction system"/>
    <property type="evidence" value="ECO:0007669"/>
    <property type="project" value="UniProtKB-UniRule"/>
</dbReference>
<dbReference type="CDD" id="cd00009">
    <property type="entry name" value="AAA"/>
    <property type="match status" value="1"/>
</dbReference>
<dbReference type="FunFam" id="3.40.50.300:FF:000006">
    <property type="entry name" value="DNA-binding transcriptional regulator NtrC"/>
    <property type="match status" value="1"/>
</dbReference>
<dbReference type="Gene3D" id="1.10.8.60">
    <property type="match status" value="1"/>
</dbReference>
<dbReference type="Gene3D" id="3.30.450.40">
    <property type="match status" value="1"/>
</dbReference>
<dbReference type="Gene3D" id="1.10.10.60">
    <property type="entry name" value="Homeodomain-like"/>
    <property type="match status" value="1"/>
</dbReference>
<dbReference type="Gene3D" id="3.40.50.300">
    <property type="entry name" value="P-loop containing nucleotide triphosphate hydrolases"/>
    <property type="match status" value="1"/>
</dbReference>
<dbReference type="HAMAP" id="MF_01314">
    <property type="entry name" value="NorR"/>
    <property type="match status" value="1"/>
</dbReference>
<dbReference type="InterPro" id="IPR003593">
    <property type="entry name" value="AAA+_ATPase"/>
</dbReference>
<dbReference type="InterPro" id="IPR003018">
    <property type="entry name" value="GAF"/>
</dbReference>
<dbReference type="InterPro" id="IPR029016">
    <property type="entry name" value="GAF-like_dom_sf"/>
</dbReference>
<dbReference type="InterPro" id="IPR009057">
    <property type="entry name" value="Homeodomain-like_sf"/>
</dbReference>
<dbReference type="InterPro" id="IPR023944">
    <property type="entry name" value="NorR"/>
</dbReference>
<dbReference type="InterPro" id="IPR027417">
    <property type="entry name" value="P-loop_NTPase"/>
</dbReference>
<dbReference type="InterPro" id="IPR002078">
    <property type="entry name" value="Sigma_54_int"/>
</dbReference>
<dbReference type="InterPro" id="IPR025662">
    <property type="entry name" value="Sigma_54_int_dom_ATP-bd_1"/>
</dbReference>
<dbReference type="InterPro" id="IPR025943">
    <property type="entry name" value="Sigma_54_int_dom_ATP-bd_2"/>
</dbReference>
<dbReference type="InterPro" id="IPR025944">
    <property type="entry name" value="Sigma_54_int_dom_CS"/>
</dbReference>
<dbReference type="NCBIfam" id="NF003451">
    <property type="entry name" value="PRK05022.1"/>
    <property type="match status" value="1"/>
</dbReference>
<dbReference type="PANTHER" id="PTHR32071:SF35">
    <property type="entry name" value="ANAEROBIC NITRIC OXIDE REDUCTASE TRANSCRIPTION REGULATOR NORR"/>
    <property type="match status" value="1"/>
</dbReference>
<dbReference type="PANTHER" id="PTHR32071">
    <property type="entry name" value="TRANSCRIPTIONAL REGULATORY PROTEIN"/>
    <property type="match status" value="1"/>
</dbReference>
<dbReference type="Pfam" id="PF01590">
    <property type="entry name" value="GAF"/>
    <property type="match status" value="1"/>
</dbReference>
<dbReference type="Pfam" id="PF00158">
    <property type="entry name" value="Sigma54_activat"/>
    <property type="match status" value="1"/>
</dbReference>
<dbReference type="SMART" id="SM00382">
    <property type="entry name" value="AAA"/>
    <property type="match status" value="1"/>
</dbReference>
<dbReference type="SMART" id="SM00065">
    <property type="entry name" value="GAF"/>
    <property type="match status" value="1"/>
</dbReference>
<dbReference type="SUPFAM" id="SSF55781">
    <property type="entry name" value="GAF domain-like"/>
    <property type="match status" value="1"/>
</dbReference>
<dbReference type="SUPFAM" id="SSF46689">
    <property type="entry name" value="Homeodomain-like"/>
    <property type="match status" value="1"/>
</dbReference>
<dbReference type="SUPFAM" id="SSF52540">
    <property type="entry name" value="P-loop containing nucleoside triphosphate hydrolases"/>
    <property type="match status" value="1"/>
</dbReference>
<dbReference type="PROSITE" id="PS00675">
    <property type="entry name" value="SIGMA54_INTERACT_1"/>
    <property type="match status" value="1"/>
</dbReference>
<dbReference type="PROSITE" id="PS00676">
    <property type="entry name" value="SIGMA54_INTERACT_2"/>
    <property type="match status" value="1"/>
</dbReference>
<dbReference type="PROSITE" id="PS00688">
    <property type="entry name" value="SIGMA54_INTERACT_3"/>
    <property type="match status" value="1"/>
</dbReference>
<dbReference type="PROSITE" id="PS50045">
    <property type="entry name" value="SIGMA54_INTERACT_4"/>
    <property type="match status" value="1"/>
</dbReference>
<organism>
    <name type="scientific">Serratia proteamaculans (strain 568)</name>
    <dbReference type="NCBI Taxonomy" id="399741"/>
    <lineage>
        <taxon>Bacteria</taxon>
        <taxon>Pseudomonadati</taxon>
        <taxon>Pseudomonadota</taxon>
        <taxon>Gammaproteobacteria</taxon>
        <taxon>Enterobacterales</taxon>
        <taxon>Yersiniaceae</taxon>
        <taxon>Serratia</taxon>
    </lineage>
</organism>
<comment type="function">
    <text evidence="1">Required for the expression of anaerobic nitric oxide (NO) reductase, acts as a transcriptional activator for at least the norVW operon. Activation also requires sigma-54.</text>
</comment>
<comment type="pathway">
    <text evidence="1">Nitrogen metabolism; nitric oxide reduction.</text>
</comment>
<comment type="sequence caution" evidence="2">
    <conflict type="erroneous initiation">
        <sequence resource="EMBL-CDS" id="ABV42133"/>
    </conflict>
</comment>
<evidence type="ECO:0000255" key="1">
    <source>
        <dbReference type="HAMAP-Rule" id="MF_01314"/>
    </source>
</evidence>
<evidence type="ECO:0000305" key="2"/>
<gene>
    <name evidence="1" type="primary">norR</name>
    <name type="ordered locus">Spro_3032</name>
</gene>
<sequence length="507" mass="55405">MTLSIQSLASIAIELQSGLTQRDRFQRLINSLRSLLRCDASALLRFEGQQFRPLAIDGLAQDVLGRRFALDAHPRLEAIARAGGVVRFPADSELPDPYDGLIPGHDQLKVHACIGLPLFAEQDLIGALTFDSLDPMQFDRFSDEELRLISALAAGALNNALLVEALERQALSPLASPGGSSPRENDEIIGLSSVMQQLKQEISIVAGSELNVLITGETGVGKELVVRAIHQGSARAANPLVYLNCAALPESVAESELFGHVKGAFTGAIQHRAGKFEMADNGTLFLDEIGELSLSLQAKLLRVIQYGDLQRVGDDRVKRVNVRILAATNRDLKQAAVDGAFRLDLYHRLSVFPLAVPPLRERVSDIALLAGYFCERCRIKLGLMQLTLSVQALSALEQYSWPGNIRELEHSIYRAAILARAEQSSSELQLLPAHFTIKAGALPARIIDDALPESAIGVSLATLTQHFQRSVIEKTLVECEMNWAATARKLELDSGNLHRLAKRLNMK</sequence>
<protein>
    <recommendedName>
        <fullName evidence="1">Anaerobic nitric oxide reductase transcription regulator NorR</fullName>
    </recommendedName>
</protein>
<name>NORR_SERP5</name>
<proteinExistence type="inferred from homology"/>
<accession>A8GG93</accession>